<organism>
    <name type="scientific">African swine fever virus (isolate Warthog/Namibia/Wart80/1980)</name>
    <name type="common">ASFV</name>
    <dbReference type="NCBI Taxonomy" id="561444"/>
    <lineage>
        <taxon>Viruses</taxon>
        <taxon>Varidnaviria</taxon>
        <taxon>Bamfordvirae</taxon>
        <taxon>Nucleocytoviricota</taxon>
        <taxon>Pokkesviricetes</taxon>
        <taxon>Asfuvirales</taxon>
        <taxon>Asfarviridae</taxon>
        <taxon>Asfivirus</taxon>
        <taxon>African swine fever virus</taxon>
    </lineage>
</organism>
<sequence>QMMMFITVYDINQKQKKRYGLRGCNLNLKATVLPLHKRI</sequence>
<organismHost>
    <name type="scientific">Ornithodoros</name>
    <name type="common">relapsing fever ticks</name>
    <dbReference type="NCBI Taxonomy" id="6937"/>
</organismHost>
<organismHost>
    <name type="scientific">Phacochoerus aethiopicus</name>
    <name type="common">Warthog</name>
    <dbReference type="NCBI Taxonomy" id="85517"/>
</organismHost>
<organismHost>
    <name type="scientific">Phacochoerus africanus</name>
    <name type="common">Warthog</name>
    <dbReference type="NCBI Taxonomy" id="41426"/>
</organismHost>
<organismHost>
    <name type="scientific">Potamochoerus larvatus</name>
    <name type="common">Bushpig</name>
    <dbReference type="NCBI Taxonomy" id="273792"/>
</organismHost>
<organismHost>
    <name type="scientific">Sus scrofa</name>
    <name type="common">Pig</name>
    <dbReference type="NCBI Taxonomy" id="9823"/>
</organismHost>
<name>VF84L_ASFWA</name>
<feature type="chain" id="PRO_0000373743" description="Uncharacterized protein C84L">
    <location>
        <begin position="1"/>
        <end position="39"/>
    </location>
</feature>
<protein>
    <recommendedName>
        <fullName>Uncharacterized protein C84L</fullName>
        <shortName>pC84L</shortName>
    </recommendedName>
</protein>
<gene>
    <name type="ordered locus">War-073</name>
</gene>
<evidence type="ECO:0000305" key="1"/>
<accession>P0CAL3</accession>
<proteinExistence type="inferred from homology"/>
<comment type="similarity">
    <text evidence="1">Belongs to the asfivirus C84L family.</text>
</comment>
<dbReference type="EMBL" id="AY261366">
    <property type="status" value="NOT_ANNOTATED_CDS"/>
    <property type="molecule type" value="Genomic_DNA"/>
</dbReference>
<dbReference type="Proteomes" id="UP000000858">
    <property type="component" value="Segment"/>
</dbReference>
<reference key="1">
    <citation type="submission" date="2003-03" db="EMBL/GenBank/DDBJ databases">
        <title>African swine fever virus genomes.</title>
        <authorList>
            <person name="Kutish G.F."/>
            <person name="Rock D.L."/>
        </authorList>
    </citation>
    <scope>NUCLEOTIDE SEQUENCE [LARGE SCALE GENOMIC DNA]</scope>
</reference>